<accession>Q6P1U0</accession>
<gene>
    <name evidence="4" type="primary">donson</name>
    <name type="ORF">TEgg057j18.1</name>
</gene>
<sequence>MAELLPGYSPSFKKPSEILRLSRRRSRSEASKAGVSPFSPGDVTKRVPGLRPFSPGPNKGAGVKRRNPFANLENTVCSPVKRRAESVPECASPEPRALVAARPSCWELGSPSPQPPQFNSVEDVIWGDPLADPLVKTESPEKPATACETPKGSVTFPADWSLKTRLLFTSSQSFSWADHLKAQEEAQGLVMHCRATAVSLPHSIQEPKLSTELRCAFQQSLVHWVHPSFPWVQLFPRIGIDRKMVGKNSPWSHDESLQQVIMSEWALSFTSLYNLLKAKLCPYFYVCTYQFTVLFRAAGLAGSDVITAVMSPTTRGLREAMKNEGITFTQPLVEEDPSKKQKNSEANSQGDITPKKENGNTETDEVSDESDEDESFSWLEEMGVEDKIKKPDSISIKLRKEKNEVKLDHKPESVVLVKGTNTFTLLNFLINCKSIVAAAGPQAGLPPTLLSPVAFRGATMQTLKARSVNVKTQVRSGYKDQFSLEITGPIMPHSLHSLTMLLQSAQRGSFSAGFYSHDPTAVFNTPIHPQAAKEISADLQNCGLHPSTVEQLSQVNQLGKLSLRHLELSDYRYTWKS</sequence>
<organism>
    <name type="scientific">Xenopus tropicalis</name>
    <name type="common">Western clawed frog</name>
    <name type="synonym">Silurana tropicalis</name>
    <dbReference type="NCBI Taxonomy" id="8364"/>
    <lineage>
        <taxon>Eukaryota</taxon>
        <taxon>Metazoa</taxon>
        <taxon>Chordata</taxon>
        <taxon>Craniata</taxon>
        <taxon>Vertebrata</taxon>
        <taxon>Euteleostomi</taxon>
        <taxon>Amphibia</taxon>
        <taxon>Batrachia</taxon>
        <taxon>Anura</taxon>
        <taxon>Pipoidea</taxon>
        <taxon>Pipidae</taxon>
        <taxon>Xenopodinae</taxon>
        <taxon>Xenopus</taxon>
        <taxon>Silurana</taxon>
    </lineage>
</organism>
<feature type="chain" id="PRO_0000236813" description="Protein downstream neighbor of son homolog">
    <location>
        <begin position="1"/>
        <end position="577"/>
    </location>
</feature>
<feature type="region of interest" description="Disordered" evidence="3">
    <location>
        <begin position="1"/>
        <end position="67"/>
    </location>
</feature>
<feature type="region of interest" description="Disordered" evidence="3">
    <location>
        <begin position="328"/>
        <end position="382"/>
    </location>
</feature>
<feature type="compositionally biased region" description="Acidic residues" evidence="3">
    <location>
        <begin position="362"/>
        <end position="375"/>
    </location>
</feature>
<dbReference type="EMBL" id="CR760582">
    <property type="protein sequence ID" value="CAJ81285.1"/>
    <property type="molecule type" value="mRNA"/>
</dbReference>
<dbReference type="EMBL" id="BC064871">
    <property type="protein sequence ID" value="AAH64871.1"/>
    <property type="molecule type" value="mRNA"/>
</dbReference>
<dbReference type="RefSeq" id="NP_989384.1">
    <property type="nucleotide sequence ID" value="NM_204053.1"/>
</dbReference>
<dbReference type="SMR" id="Q6P1U0"/>
<dbReference type="FunCoup" id="Q6P1U0">
    <property type="interactions" value="1787"/>
</dbReference>
<dbReference type="STRING" id="8364.ENSXETP00000035423"/>
<dbReference type="PaxDb" id="8364-ENSXETP00000058025"/>
<dbReference type="GeneID" id="395018"/>
<dbReference type="KEGG" id="xtr:395018"/>
<dbReference type="AGR" id="Xenbase:XB-GENE-1007401"/>
<dbReference type="CTD" id="29980"/>
<dbReference type="Xenbase" id="XB-GENE-1007401">
    <property type="gene designation" value="donson"/>
</dbReference>
<dbReference type="eggNOG" id="KOG4734">
    <property type="taxonomic scope" value="Eukaryota"/>
</dbReference>
<dbReference type="HOGENOM" id="CLU_021567_0_0_1"/>
<dbReference type="InParanoid" id="Q6P1U0"/>
<dbReference type="OMA" id="WCLKTRV"/>
<dbReference type="OrthoDB" id="534063at2759"/>
<dbReference type="PhylomeDB" id="Q6P1U0"/>
<dbReference type="Proteomes" id="UP000008143">
    <property type="component" value="Chromosome 2"/>
</dbReference>
<dbReference type="Bgee" id="ENSXETG00000027925">
    <property type="expression patterns" value="Expressed in 4-cell stage embryo and 8 other cell types or tissues"/>
</dbReference>
<dbReference type="GO" id="GO:0005634">
    <property type="term" value="C:nucleus"/>
    <property type="evidence" value="ECO:0000250"/>
    <property type="project" value="UniProtKB"/>
</dbReference>
<dbReference type="GO" id="GO:0005657">
    <property type="term" value="C:replication fork"/>
    <property type="evidence" value="ECO:0000250"/>
    <property type="project" value="UniProtKB"/>
</dbReference>
<dbReference type="GO" id="GO:0030894">
    <property type="term" value="C:replisome"/>
    <property type="evidence" value="ECO:0000250"/>
    <property type="project" value="UniProtKB"/>
</dbReference>
<dbReference type="GO" id="GO:0051301">
    <property type="term" value="P:cell division"/>
    <property type="evidence" value="ECO:0007669"/>
    <property type="project" value="UniProtKB-KW"/>
</dbReference>
<dbReference type="GO" id="GO:0000077">
    <property type="term" value="P:DNA damage checkpoint signaling"/>
    <property type="evidence" value="ECO:0000250"/>
    <property type="project" value="UniProtKB"/>
</dbReference>
<dbReference type="GO" id="GO:0006260">
    <property type="term" value="P:DNA replication"/>
    <property type="evidence" value="ECO:0000250"/>
    <property type="project" value="UniProtKB"/>
</dbReference>
<dbReference type="GO" id="GO:0033314">
    <property type="term" value="P:mitotic DNA replication checkpoint signaling"/>
    <property type="evidence" value="ECO:0000250"/>
    <property type="project" value="UniProtKB"/>
</dbReference>
<dbReference type="GO" id="GO:0007095">
    <property type="term" value="P:mitotic G2 DNA damage checkpoint signaling"/>
    <property type="evidence" value="ECO:0000250"/>
    <property type="project" value="UniProtKB"/>
</dbReference>
<dbReference type="GO" id="GO:0031297">
    <property type="term" value="P:replication fork processing"/>
    <property type="evidence" value="ECO:0000250"/>
    <property type="project" value="UniProtKB"/>
</dbReference>
<dbReference type="InterPro" id="IPR024861">
    <property type="entry name" value="Donson"/>
</dbReference>
<dbReference type="PANTHER" id="PTHR12972">
    <property type="entry name" value="DOWNSTREAM NEIGHBOR OF SON"/>
    <property type="match status" value="1"/>
</dbReference>
<dbReference type="PANTHER" id="PTHR12972:SF0">
    <property type="entry name" value="PROTEIN DOWNSTREAM NEIGHBOR OF SON"/>
    <property type="match status" value="1"/>
</dbReference>
<dbReference type="PRINTS" id="PR02064">
    <property type="entry name" value="DONSON"/>
</dbReference>
<evidence type="ECO:0000250" key="1">
    <source>
        <dbReference type="UniProtKB" id="Q9NYP3"/>
    </source>
</evidence>
<evidence type="ECO:0000255" key="2"/>
<evidence type="ECO:0000256" key="3">
    <source>
        <dbReference type="SAM" id="MobiDB-lite"/>
    </source>
</evidence>
<evidence type="ECO:0000312" key="4">
    <source>
        <dbReference type="EMBL" id="AAH64871.1"/>
    </source>
</evidence>
<protein>
    <recommendedName>
        <fullName>Protein downstream neighbor of son homolog</fullName>
    </recommendedName>
</protein>
<proteinExistence type="evidence at transcript level"/>
<comment type="function">
    <text evidence="1">Replisome component that maintains genome stability by protecting stalled or damaged replication forks. After the induction of replication stress, required for the stabilization of stalled replication forks, the efficient activation of the intra-S-phase and G/2M cell-cycle checkpoints and the maintenance of genome stability.</text>
</comment>
<comment type="subunit">
    <text evidence="1">Component of the replisome complex.</text>
</comment>
<comment type="subcellular location">
    <subcellularLocation>
        <location evidence="1">Nucleus</location>
    </subcellularLocation>
    <text evidence="1">Localizes at DNA replication sites.</text>
</comment>
<comment type="similarity">
    <text evidence="2">Belongs to the DONSON family.</text>
</comment>
<name>DONS_XENTR</name>
<reference evidence="4" key="1">
    <citation type="submission" date="2006-03" db="EMBL/GenBank/DDBJ databases">
        <authorList>
            <consortium name="Sanger Xenopus tropicalis EST/cDNA project"/>
        </authorList>
    </citation>
    <scope>NUCLEOTIDE SEQUENCE [LARGE SCALE MRNA]</scope>
    <source>
        <tissue>Egg</tissue>
    </source>
</reference>
<reference evidence="4" key="2">
    <citation type="submission" date="2004-01" db="EMBL/GenBank/DDBJ databases">
        <authorList>
            <consortium name="NIH - Xenopus Gene Collection (XGC) project"/>
        </authorList>
    </citation>
    <scope>NUCLEOTIDE SEQUENCE [LARGE SCALE MRNA]</scope>
    <source>
        <tissue evidence="4">Embryo</tissue>
    </source>
</reference>
<keyword id="KW-0131">Cell cycle</keyword>
<keyword id="KW-0132">Cell division</keyword>
<keyword id="KW-0217">Developmental protein</keyword>
<keyword id="KW-0539">Nucleus</keyword>
<keyword id="KW-1185">Reference proteome</keyword>